<accession>Q0AJD3</accession>
<keyword id="KW-0963">Cytoplasm</keyword>
<keyword id="KW-0489">Methyltransferase</keyword>
<keyword id="KW-0698">rRNA processing</keyword>
<keyword id="KW-0949">S-adenosyl-L-methionine</keyword>
<keyword id="KW-0808">Transferase</keyword>
<evidence type="ECO:0000255" key="1">
    <source>
        <dbReference type="HAMAP-Rule" id="MF_01007"/>
    </source>
</evidence>
<gene>
    <name evidence="1" type="primary">rsmH</name>
    <name type="synonym">mraW</name>
    <name type="ordered locus">Neut_0254</name>
</gene>
<proteinExistence type="inferred from homology"/>
<sequence>MHISVLLEEAVDALNIQKGGIYVDGTYGRGGHSRLILSRLDKSGQLIAFDKDPAAISEARSILDERFQAVHSSYAGMYTALQSLGINRVDGILLDLGVSSIQLDEASRGFSFRHDGPLDMRMDSSRGKTAAEWLTMASETELKEIIRTYGEERYAGQIASAIVMEQARQPISTTLRLAEIVAAVVRKRGHRDDRQHPATRTFQAIRIHLNQELEELSMTLPQCVELLNTGGRLVVISFHSLEDRIVKRFMRMQTGTDTLPRRLPIREEESRLHNQQKLRIIGKKIRPGSDEVSANPRARSAVMRVAEKLETRNAISR</sequence>
<feature type="chain" id="PRO_0000318878" description="Ribosomal RNA small subunit methyltransferase H">
    <location>
        <begin position="1"/>
        <end position="317"/>
    </location>
</feature>
<feature type="binding site" evidence="1">
    <location>
        <begin position="30"/>
        <end position="32"/>
    </location>
    <ligand>
        <name>S-adenosyl-L-methionine</name>
        <dbReference type="ChEBI" id="CHEBI:59789"/>
    </ligand>
</feature>
<feature type="binding site" evidence="1">
    <location>
        <position position="50"/>
    </location>
    <ligand>
        <name>S-adenosyl-L-methionine</name>
        <dbReference type="ChEBI" id="CHEBI:59789"/>
    </ligand>
</feature>
<feature type="binding site" evidence="1">
    <location>
        <position position="78"/>
    </location>
    <ligand>
        <name>S-adenosyl-L-methionine</name>
        <dbReference type="ChEBI" id="CHEBI:59789"/>
    </ligand>
</feature>
<feature type="binding site" evidence="1">
    <location>
        <position position="95"/>
    </location>
    <ligand>
        <name>S-adenosyl-L-methionine</name>
        <dbReference type="ChEBI" id="CHEBI:59789"/>
    </ligand>
</feature>
<feature type="binding site" evidence="1">
    <location>
        <position position="102"/>
    </location>
    <ligand>
        <name>S-adenosyl-L-methionine</name>
        <dbReference type="ChEBI" id="CHEBI:59789"/>
    </ligand>
</feature>
<name>RSMH_NITEC</name>
<protein>
    <recommendedName>
        <fullName evidence="1">Ribosomal RNA small subunit methyltransferase H</fullName>
        <ecNumber evidence="1">2.1.1.199</ecNumber>
    </recommendedName>
    <alternativeName>
        <fullName evidence="1">16S rRNA m(4)C1402 methyltransferase</fullName>
    </alternativeName>
    <alternativeName>
        <fullName evidence="1">rRNA (cytosine-N(4)-)-methyltransferase RsmH</fullName>
    </alternativeName>
</protein>
<reference key="1">
    <citation type="journal article" date="2007" name="Environ. Microbiol.">
        <title>Whole-genome analysis of the ammonia-oxidizing bacterium, Nitrosomonas eutropha C91: implications for niche adaptation.</title>
        <authorList>
            <person name="Stein L.Y."/>
            <person name="Arp D.J."/>
            <person name="Berube P.M."/>
            <person name="Chain P.S."/>
            <person name="Hauser L."/>
            <person name="Jetten M.S."/>
            <person name="Klotz M.G."/>
            <person name="Larimer F.W."/>
            <person name="Norton J.M."/>
            <person name="Op den Camp H.J.M."/>
            <person name="Shin M."/>
            <person name="Wei X."/>
        </authorList>
    </citation>
    <scope>NUCLEOTIDE SEQUENCE [LARGE SCALE GENOMIC DNA]</scope>
    <source>
        <strain>DSM 101675 / C91 / Nm57</strain>
    </source>
</reference>
<organism>
    <name type="scientific">Nitrosomonas eutropha (strain DSM 101675 / C91 / Nm57)</name>
    <dbReference type="NCBI Taxonomy" id="335283"/>
    <lineage>
        <taxon>Bacteria</taxon>
        <taxon>Pseudomonadati</taxon>
        <taxon>Pseudomonadota</taxon>
        <taxon>Betaproteobacteria</taxon>
        <taxon>Nitrosomonadales</taxon>
        <taxon>Nitrosomonadaceae</taxon>
        <taxon>Nitrosomonas</taxon>
    </lineage>
</organism>
<dbReference type="EC" id="2.1.1.199" evidence="1"/>
<dbReference type="EMBL" id="CP000450">
    <property type="protein sequence ID" value="ABI58538.1"/>
    <property type="molecule type" value="Genomic_DNA"/>
</dbReference>
<dbReference type="RefSeq" id="WP_011633382.1">
    <property type="nucleotide sequence ID" value="NC_008344.1"/>
</dbReference>
<dbReference type="SMR" id="Q0AJD3"/>
<dbReference type="STRING" id="335283.Neut_0254"/>
<dbReference type="KEGG" id="net:Neut_0254"/>
<dbReference type="eggNOG" id="COG0275">
    <property type="taxonomic scope" value="Bacteria"/>
</dbReference>
<dbReference type="HOGENOM" id="CLU_038422_2_0_4"/>
<dbReference type="OrthoDB" id="9806637at2"/>
<dbReference type="Proteomes" id="UP000001966">
    <property type="component" value="Chromosome"/>
</dbReference>
<dbReference type="GO" id="GO:0005737">
    <property type="term" value="C:cytoplasm"/>
    <property type="evidence" value="ECO:0007669"/>
    <property type="project" value="UniProtKB-SubCell"/>
</dbReference>
<dbReference type="GO" id="GO:0071424">
    <property type="term" value="F:rRNA (cytosine-N4-)-methyltransferase activity"/>
    <property type="evidence" value="ECO:0007669"/>
    <property type="project" value="UniProtKB-UniRule"/>
</dbReference>
<dbReference type="GO" id="GO:0070475">
    <property type="term" value="P:rRNA base methylation"/>
    <property type="evidence" value="ECO:0007669"/>
    <property type="project" value="UniProtKB-UniRule"/>
</dbReference>
<dbReference type="Gene3D" id="1.10.150.170">
    <property type="entry name" value="Putative methyltransferase TM0872, insert domain"/>
    <property type="match status" value="1"/>
</dbReference>
<dbReference type="Gene3D" id="3.40.50.150">
    <property type="entry name" value="Vaccinia Virus protein VP39"/>
    <property type="match status" value="1"/>
</dbReference>
<dbReference type="HAMAP" id="MF_01007">
    <property type="entry name" value="16SrRNA_methyltr_H"/>
    <property type="match status" value="1"/>
</dbReference>
<dbReference type="InterPro" id="IPR002903">
    <property type="entry name" value="RsmH"/>
</dbReference>
<dbReference type="InterPro" id="IPR023397">
    <property type="entry name" value="SAM-dep_MeTrfase_MraW_recog"/>
</dbReference>
<dbReference type="InterPro" id="IPR029063">
    <property type="entry name" value="SAM-dependent_MTases_sf"/>
</dbReference>
<dbReference type="NCBIfam" id="TIGR00006">
    <property type="entry name" value="16S rRNA (cytosine(1402)-N(4))-methyltransferase RsmH"/>
    <property type="match status" value="1"/>
</dbReference>
<dbReference type="PANTHER" id="PTHR11265:SF0">
    <property type="entry name" value="12S RRNA N4-METHYLCYTIDINE METHYLTRANSFERASE"/>
    <property type="match status" value="1"/>
</dbReference>
<dbReference type="PANTHER" id="PTHR11265">
    <property type="entry name" value="S-ADENOSYL-METHYLTRANSFERASE MRAW"/>
    <property type="match status" value="1"/>
</dbReference>
<dbReference type="Pfam" id="PF01795">
    <property type="entry name" value="Methyltransf_5"/>
    <property type="match status" value="1"/>
</dbReference>
<dbReference type="PIRSF" id="PIRSF004486">
    <property type="entry name" value="MraW"/>
    <property type="match status" value="1"/>
</dbReference>
<dbReference type="SUPFAM" id="SSF81799">
    <property type="entry name" value="Putative methyltransferase TM0872, insert domain"/>
    <property type="match status" value="1"/>
</dbReference>
<dbReference type="SUPFAM" id="SSF53335">
    <property type="entry name" value="S-adenosyl-L-methionine-dependent methyltransferases"/>
    <property type="match status" value="1"/>
</dbReference>
<comment type="function">
    <text evidence="1">Specifically methylates the N4 position of cytidine in position 1402 (C1402) of 16S rRNA.</text>
</comment>
<comment type="catalytic activity">
    <reaction evidence="1">
        <text>cytidine(1402) in 16S rRNA + S-adenosyl-L-methionine = N(4)-methylcytidine(1402) in 16S rRNA + S-adenosyl-L-homocysteine + H(+)</text>
        <dbReference type="Rhea" id="RHEA:42928"/>
        <dbReference type="Rhea" id="RHEA-COMP:10286"/>
        <dbReference type="Rhea" id="RHEA-COMP:10287"/>
        <dbReference type="ChEBI" id="CHEBI:15378"/>
        <dbReference type="ChEBI" id="CHEBI:57856"/>
        <dbReference type="ChEBI" id="CHEBI:59789"/>
        <dbReference type="ChEBI" id="CHEBI:74506"/>
        <dbReference type="ChEBI" id="CHEBI:82748"/>
        <dbReference type="EC" id="2.1.1.199"/>
    </reaction>
</comment>
<comment type="subcellular location">
    <subcellularLocation>
        <location evidence="1">Cytoplasm</location>
    </subcellularLocation>
</comment>
<comment type="similarity">
    <text evidence="1">Belongs to the methyltransferase superfamily. RsmH family.</text>
</comment>